<protein>
    <recommendedName>
        <fullName evidence="1">Ribonuclease P protein component</fullName>
        <shortName evidence="1">RNase P protein</shortName>
        <shortName evidence="1">RNaseP protein</shortName>
        <ecNumber evidence="1">3.1.26.5</ecNumber>
    </recommendedName>
    <alternativeName>
        <fullName evidence="1">Protein C5</fullName>
    </alternativeName>
</protein>
<keyword id="KW-0255">Endonuclease</keyword>
<keyword id="KW-0378">Hydrolase</keyword>
<keyword id="KW-0540">Nuclease</keyword>
<keyword id="KW-1185">Reference proteome</keyword>
<keyword id="KW-0694">RNA-binding</keyword>
<keyword id="KW-0819">tRNA processing</keyword>
<organism>
    <name type="scientific">Caulobacter vibrioides (strain NA1000 / CB15N)</name>
    <name type="common">Caulobacter crescentus</name>
    <dbReference type="NCBI Taxonomy" id="565050"/>
    <lineage>
        <taxon>Bacteria</taxon>
        <taxon>Pseudomonadati</taxon>
        <taxon>Pseudomonadota</taxon>
        <taxon>Alphaproteobacteria</taxon>
        <taxon>Caulobacterales</taxon>
        <taxon>Caulobacteraceae</taxon>
        <taxon>Caulobacter</taxon>
    </lineage>
</organism>
<sequence length="149" mass="16332">MAEAPHTLKFERLRKRPDFLLAAKAPALSRGAVFIQMRQRTDDDPTVRVGFTATKKIGGAVERNRAKRRLREAARLVLPLHARPSHDYVFIARGGTGTREWARLLDDVKTALISLAADLDRGGTKVSRRSNGALHDAAPSSQPDPTVSG</sequence>
<gene>
    <name evidence="1" type="primary">rnpA</name>
    <name type="ordered locus">CCNA_00807</name>
</gene>
<feature type="chain" id="PRO_1000194619" description="Ribonuclease P protein component">
    <location>
        <begin position="1"/>
        <end position="149"/>
    </location>
</feature>
<feature type="region of interest" description="Disordered" evidence="2">
    <location>
        <begin position="123"/>
        <end position="149"/>
    </location>
</feature>
<feature type="compositionally biased region" description="Polar residues" evidence="2">
    <location>
        <begin position="139"/>
        <end position="149"/>
    </location>
</feature>
<name>RNPA_CAUVN</name>
<proteinExistence type="inferred from homology"/>
<accession>B8H1E9</accession>
<comment type="function">
    <text evidence="1">RNaseP catalyzes the removal of the 5'-leader sequence from pre-tRNA to produce the mature 5'-terminus. It can also cleave other RNA substrates such as 4.5S RNA. The protein component plays an auxiliary but essential role in vivo by binding to the 5'-leader sequence and broadening the substrate specificity of the ribozyme.</text>
</comment>
<comment type="catalytic activity">
    <reaction evidence="1">
        <text>Endonucleolytic cleavage of RNA, removing 5'-extranucleotides from tRNA precursor.</text>
        <dbReference type="EC" id="3.1.26.5"/>
    </reaction>
</comment>
<comment type="subunit">
    <text evidence="1">Consists of a catalytic RNA component (M1 or rnpB) and a protein subunit.</text>
</comment>
<comment type="similarity">
    <text evidence="1">Belongs to the RnpA family.</text>
</comment>
<reference key="1">
    <citation type="journal article" date="2010" name="J. Bacteriol.">
        <title>The genetic basis of laboratory adaptation in Caulobacter crescentus.</title>
        <authorList>
            <person name="Marks M.E."/>
            <person name="Castro-Rojas C.M."/>
            <person name="Teiling C."/>
            <person name="Du L."/>
            <person name="Kapatral V."/>
            <person name="Walunas T.L."/>
            <person name="Crosson S."/>
        </authorList>
    </citation>
    <scope>NUCLEOTIDE SEQUENCE [LARGE SCALE GENOMIC DNA]</scope>
    <source>
        <strain>NA1000 / CB15N</strain>
    </source>
</reference>
<dbReference type="EC" id="3.1.26.5" evidence="1"/>
<dbReference type="EMBL" id="CP001340">
    <property type="protein sequence ID" value="ACL94272.1"/>
    <property type="molecule type" value="Genomic_DNA"/>
</dbReference>
<dbReference type="RefSeq" id="WP_010918654.1">
    <property type="nucleotide sequence ID" value="NC_011916.1"/>
</dbReference>
<dbReference type="RefSeq" id="YP_002516180.1">
    <property type="nucleotide sequence ID" value="NC_011916.1"/>
</dbReference>
<dbReference type="SMR" id="B8H1E9"/>
<dbReference type="GeneID" id="7329843"/>
<dbReference type="KEGG" id="ccs:CCNA_00807"/>
<dbReference type="PATRIC" id="fig|565050.3.peg.796"/>
<dbReference type="HOGENOM" id="CLU_117179_6_0_5"/>
<dbReference type="OrthoDB" id="9810867at2"/>
<dbReference type="PhylomeDB" id="B8H1E9"/>
<dbReference type="Proteomes" id="UP000001364">
    <property type="component" value="Chromosome"/>
</dbReference>
<dbReference type="GO" id="GO:0030677">
    <property type="term" value="C:ribonuclease P complex"/>
    <property type="evidence" value="ECO:0007669"/>
    <property type="project" value="TreeGrafter"/>
</dbReference>
<dbReference type="GO" id="GO:0042781">
    <property type="term" value="F:3'-tRNA processing endoribonuclease activity"/>
    <property type="evidence" value="ECO:0007669"/>
    <property type="project" value="TreeGrafter"/>
</dbReference>
<dbReference type="GO" id="GO:0004526">
    <property type="term" value="F:ribonuclease P activity"/>
    <property type="evidence" value="ECO:0007669"/>
    <property type="project" value="UniProtKB-UniRule"/>
</dbReference>
<dbReference type="GO" id="GO:0000049">
    <property type="term" value="F:tRNA binding"/>
    <property type="evidence" value="ECO:0007669"/>
    <property type="project" value="UniProtKB-UniRule"/>
</dbReference>
<dbReference type="GO" id="GO:0001682">
    <property type="term" value="P:tRNA 5'-leader removal"/>
    <property type="evidence" value="ECO:0007669"/>
    <property type="project" value="UniProtKB-UniRule"/>
</dbReference>
<dbReference type="Gene3D" id="3.30.230.10">
    <property type="match status" value="1"/>
</dbReference>
<dbReference type="HAMAP" id="MF_00227">
    <property type="entry name" value="RNase_P"/>
    <property type="match status" value="1"/>
</dbReference>
<dbReference type="InterPro" id="IPR020568">
    <property type="entry name" value="Ribosomal_Su5_D2-typ_SF"/>
</dbReference>
<dbReference type="InterPro" id="IPR014721">
    <property type="entry name" value="Ribsml_uS5_D2-typ_fold_subgr"/>
</dbReference>
<dbReference type="InterPro" id="IPR000100">
    <property type="entry name" value="RNase_P"/>
</dbReference>
<dbReference type="InterPro" id="IPR020539">
    <property type="entry name" value="RNase_P_CS"/>
</dbReference>
<dbReference type="NCBIfam" id="TIGR00188">
    <property type="entry name" value="rnpA"/>
    <property type="match status" value="1"/>
</dbReference>
<dbReference type="PANTHER" id="PTHR33992">
    <property type="entry name" value="RIBONUCLEASE P PROTEIN COMPONENT"/>
    <property type="match status" value="1"/>
</dbReference>
<dbReference type="PANTHER" id="PTHR33992:SF1">
    <property type="entry name" value="RIBONUCLEASE P PROTEIN COMPONENT"/>
    <property type="match status" value="1"/>
</dbReference>
<dbReference type="Pfam" id="PF00825">
    <property type="entry name" value="Ribonuclease_P"/>
    <property type="match status" value="1"/>
</dbReference>
<dbReference type="SUPFAM" id="SSF54211">
    <property type="entry name" value="Ribosomal protein S5 domain 2-like"/>
    <property type="match status" value="1"/>
</dbReference>
<dbReference type="PROSITE" id="PS00648">
    <property type="entry name" value="RIBONUCLEASE_P"/>
    <property type="match status" value="1"/>
</dbReference>
<evidence type="ECO:0000255" key="1">
    <source>
        <dbReference type="HAMAP-Rule" id="MF_00227"/>
    </source>
</evidence>
<evidence type="ECO:0000256" key="2">
    <source>
        <dbReference type="SAM" id="MobiDB-lite"/>
    </source>
</evidence>